<sequence length="214" mass="22187">MNKAELIDVLTQKLGSDRRQATAAVENVVDTIVRAVHKGDSVTITGFGVFEQRRRAARVARNPRTGETVKVKPTSVPAFRPGAQFKAVVSGAQRLPAEGPAVKRGVGASAAKKVAKKAPAKKATKAAKKAATKAPARKAATKAPAKKAATKAPAKKAVKATKSPAKKVTKAVKKTAVKASVRKAATKAPAKKAAAKRPATKAPAKKATARRGRK</sequence>
<proteinExistence type="inferred from homology"/>
<evidence type="ECO:0000250" key="1">
    <source>
        <dbReference type="UniProtKB" id="A5U6Z7"/>
    </source>
</evidence>
<evidence type="ECO:0000250" key="2">
    <source>
        <dbReference type="UniProtKB" id="P9WMK7"/>
    </source>
</evidence>
<evidence type="ECO:0000250" key="3">
    <source>
        <dbReference type="UniProtKB" id="Q9XB18"/>
    </source>
</evidence>
<evidence type="ECO:0000250" key="4">
    <source>
        <dbReference type="UniProtKB" id="Q9ZHC5"/>
    </source>
</evidence>
<evidence type="ECO:0000256" key="5">
    <source>
        <dbReference type="SAM" id="MobiDB-lite"/>
    </source>
</evidence>
<evidence type="ECO:0000305" key="6"/>
<evidence type="ECO:0000312" key="7">
    <source>
        <dbReference type="EMBL" id="AAK47393.1"/>
    </source>
</evidence>
<gene>
    <name type="primary">hupB</name>
    <name type="synonym">hlp</name>
    <name type="synonym">hup</name>
    <name type="synonym">lbp21</name>
    <name evidence="7" type="ordered locus">MT3064</name>
</gene>
<protein>
    <recommendedName>
        <fullName evidence="6">DNA-binding protein HupB</fullName>
        <shortName evidence="2">HupB</shortName>
        <ecNumber evidence="2">1.16.3.1</ecNumber>
    </recommendedName>
    <alternativeName>
        <fullName>21 kDa laminin-2-binding protein</fullName>
    </alternativeName>
    <alternativeName>
        <fullName>28 kDa iron-regulated protein</fullName>
        <shortName>Irep-28</shortName>
    </alternativeName>
    <alternativeName>
        <fullName>DNA-binding protein HU homolog</fullName>
    </alternativeName>
    <alternativeName>
        <fullName>Histone-like protein</fullName>
        <shortName>Hlp</shortName>
    </alternativeName>
</protein>
<organism>
    <name type="scientific">Mycobacterium tuberculosis (strain CDC 1551 / Oshkosh)</name>
    <dbReference type="NCBI Taxonomy" id="83331"/>
    <lineage>
        <taxon>Bacteria</taxon>
        <taxon>Bacillati</taxon>
        <taxon>Actinomycetota</taxon>
        <taxon>Actinomycetes</taxon>
        <taxon>Mycobacteriales</taxon>
        <taxon>Mycobacteriaceae</taxon>
        <taxon>Mycobacterium</taxon>
        <taxon>Mycobacterium tuberculosis complex</taxon>
    </lineage>
</organism>
<dbReference type="EC" id="1.16.3.1" evidence="2"/>
<dbReference type="EMBL" id="AE000516">
    <property type="protein sequence ID" value="AAK47393.1"/>
    <property type="molecule type" value="Genomic_DNA"/>
</dbReference>
<dbReference type="PIR" id="G70673">
    <property type="entry name" value="G70673"/>
</dbReference>
<dbReference type="RefSeq" id="WP_003415107.1">
    <property type="nucleotide sequence ID" value="NZ_KK341227.1"/>
</dbReference>
<dbReference type="SMR" id="P9WMK6"/>
<dbReference type="GeneID" id="45426975"/>
<dbReference type="KEGG" id="mtc:MT3064"/>
<dbReference type="PATRIC" id="fig|83331.31.peg.3307"/>
<dbReference type="HOGENOM" id="CLU_085366_0_0_11"/>
<dbReference type="Proteomes" id="UP000001020">
    <property type="component" value="Chromosome"/>
</dbReference>
<dbReference type="GO" id="GO:0005829">
    <property type="term" value="C:cytosol"/>
    <property type="evidence" value="ECO:0007669"/>
    <property type="project" value="TreeGrafter"/>
</dbReference>
<dbReference type="GO" id="GO:0005576">
    <property type="term" value="C:extracellular region"/>
    <property type="evidence" value="ECO:0007669"/>
    <property type="project" value="UniProtKB-KW"/>
</dbReference>
<dbReference type="GO" id="GO:0009295">
    <property type="term" value="C:nucleoid"/>
    <property type="evidence" value="ECO:0007669"/>
    <property type="project" value="UniProtKB-SubCell"/>
</dbReference>
<dbReference type="GO" id="GO:0003677">
    <property type="term" value="F:DNA binding"/>
    <property type="evidence" value="ECO:0007669"/>
    <property type="project" value="UniProtKB-KW"/>
</dbReference>
<dbReference type="GO" id="GO:0016491">
    <property type="term" value="F:oxidoreductase activity"/>
    <property type="evidence" value="ECO:0007669"/>
    <property type="project" value="UniProtKB-KW"/>
</dbReference>
<dbReference type="GO" id="GO:0030527">
    <property type="term" value="F:structural constituent of chromatin"/>
    <property type="evidence" value="ECO:0007669"/>
    <property type="project" value="InterPro"/>
</dbReference>
<dbReference type="GO" id="GO:0071555">
    <property type="term" value="P:cell wall organization"/>
    <property type="evidence" value="ECO:0007669"/>
    <property type="project" value="UniProtKB-KW"/>
</dbReference>
<dbReference type="GO" id="GO:0030261">
    <property type="term" value="P:chromosome condensation"/>
    <property type="evidence" value="ECO:0007669"/>
    <property type="project" value="UniProtKB-KW"/>
</dbReference>
<dbReference type="GO" id="GO:0006879">
    <property type="term" value="P:intracellular iron ion homeostasis"/>
    <property type="evidence" value="ECO:0007669"/>
    <property type="project" value="UniProtKB-KW"/>
</dbReference>
<dbReference type="CDD" id="cd13831">
    <property type="entry name" value="HU"/>
    <property type="match status" value="1"/>
</dbReference>
<dbReference type="FunFam" id="4.10.520.10:FF:000006">
    <property type="entry name" value="DNA-binding protein HU"/>
    <property type="match status" value="1"/>
</dbReference>
<dbReference type="Gene3D" id="4.10.520.10">
    <property type="entry name" value="IHF-like DNA-binding proteins"/>
    <property type="match status" value="1"/>
</dbReference>
<dbReference type="InterPro" id="IPR000119">
    <property type="entry name" value="Hist_DNA-bd"/>
</dbReference>
<dbReference type="InterPro" id="IPR020816">
    <property type="entry name" value="Histone-like_DNA-bd_CS"/>
</dbReference>
<dbReference type="InterPro" id="IPR010992">
    <property type="entry name" value="IHF-like_DNA-bd_dom_sf"/>
</dbReference>
<dbReference type="PANTHER" id="PTHR33175">
    <property type="entry name" value="DNA-BINDING PROTEIN HU"/>
    <property type="match status" value="1"/>
</dbReference>
<dbReference type="PANTHER" id="PTHR33175:SF3">
    <property type="entry name" value="DNA-BINDING PROTEIN HU-BETA"/>
    <property type="match status" value="1"/>
</dbReference>
<dbReference type="Pfam" id="PF00216">
    <property type="entry name" value="Bac_DNA_binding"/>
    <property type="match status" value="1"/>
</dbReference>
<dbReference type="PRINTS" id="PR01727">
    <property type="entry name" value="DNABINDINGHU"/>
</dbReference>
<dbReference type="SMART" id="SM00411">
    <property type="entry name" value="BHL"/>
    <property type="match status" value="1"/>
</dbReference>
<dbReference type="SUPFAM" id="SSF47729">
    <property type="entry name" value="IHF-like DNA-binding proteins"/>
    <property type="match status" value="1"/>
</dbReference>
<dbReference type="PROSITE" id="PS00045">
    <property type="entry name" value="HISTONE_LIKE"/>
    <property type="match status" value="1"/>
</dbReference>
<name>DBH_MYCTO</name>
<keyword id="KW-0007">Acetylation</keyword>
<keyword id="KW-0010">Activator</keyword>
<keyword id="KW-0134">Cell wall</keyword>
<keyword id="KW-0961">Cell wall biogenesis/degradation</keyword>
<keyword id="KW-0963">Cytoplasm</keyword>
<keyword id="KW-0226">DNA condensation</keyword>
<keyword id="KW-0238">DNA-binding</keyword>
<keyword id="KW-0408">Iron</keyword>
<keyword id="KW-0409">Iron storage</keyword>
<keyword id="KW-0488">Methylation</keyword>
<keyword id="KW-0560">Oxidoreductase</keyword>
<keyword id="KW-1185">Reference proteome</keyword>
<keyword id="KW-0677">Repeat</keyword>
<keyword id="KW-0964">Secreted</keyword>
<accession>P9WMK6</accession>
<accession>L0TBG2</accession>
<accession>P95109</accession>
<comment type="function">
    <text evidence="2 4">A nucleoid-associated protein (NAP) that plays a role in local chromosome architecture and chromosome compactation. Required for biofilm formation, stress survival and possibly in cell wall assembly, probably influences transcription (By similarity). RNase E and HupB jointly contribute to cellular adaptation to changing growth conditions and survival during antibiotic treatment and in the host (By similarity).</text>
</comment>
<comment type="function">
    <text evidence="2">Has ferroxidase activity, converts Fe(2+) into Fe(3+). Binds Fe(3+) but not Fe(2+); prevents the generation of hydroxyl radicals by the Fenton reaction and thus protects DNA from damage. May function in iron storage.</text>
</comment>
<comment type="catalytic activity">
    <reaction evidence="2">
        <text>4 Fe(2+) + O2 + 4 H(+) = 4 Fe(3+) + 2 H2O</text>
        <dbReference type="Rhea" id="RHEA:11148"/>
        <dbReference type="ChEBI" id="CHEBI:15377"/>
        <dbReference type="ChEBI" id="CHEBI:15378"/>
        <dbReference type="ChEBI" id="CHEBI:15379"/>
        <dbReference type="ChEBI" id="CHEBI:29033"/>
        <dbReference type="ChEBI" id="CHEBI:29034"/>
        <dbReference type="EC" id="1.16.3.1"/>
    </reaction>
    <physiologicalReaction direction="left-to-right" evidence="3">
        <dbReference type="Rhea" id="RHEA:11149"/>
    </physiologicalReaction>
</comment>
<comment type="subunit">
    <text evidence="1 2 3">Oligomerizes (By similarity). Interacts with topoisomerase 1 (topA) (By similarity). Interacts with Eis (By similarity). Interacts with antigen 85 proteins (fbpA, fbpB, fbpC) (By similarity).</text>
</comment>
<comment type="subcellular location">
    <subcellularLocation>
        <location evidence="2">Cytoplasm</location>
        <location evidence="2">Nucleoid</location>
    </subcellularLocation>
    <subcellularLocation>
        <location evidence="2">Secreted</location>
        <location evidence="2">Cell wall</location>
    </subcellularLocation>
</comment>
<comment type="PTM">
    <text evidence="1 2">May also be methylated and possibly phosphorylated in vivo.</text>
</comment>
<comment type="similarity">
    <text evidence="6">Belongs to the bacterial histone-like protein family. Long actinobacterial subfamily.</text>
</comment>
<reference key="1">
    <citation type="journal article" date="2002" name="J. Bacteriol.">
        <title>Whole-genome comparison of Mycobacterium tuberculosis clinical and laboratory strains.</title>
        <authorList>
            <person name="Fleischmann R.D."/>
            <person name="Alland D."/>
            <person name="Eisen J.A."/>
            <person name="Carpenter L."/>
            <person name="White O."/>
            <person name="Peterson J.D."/>
            <person name="DeBoy R.T."/>
            <person name="Dodson R.J."/>
            <person name="Gwinn M.L."/>
            <person name="Haft D.H."/>
            <person name="Hickey E.K."/>
            <person name="Kolonay J.F."/>
            <person name="Nelson W.C."/>
            <person name="Umayam L.A."/>
            <person name="Ermolaeva M.D."/>
            <person name="Salzberg S.L."/>
            <person name="Delcher A."/>
            <person name="Utterback T.R."/>
            <person name="Weidman J.F."/>
            <person name="Khouri H.M."/>
            <person name="Gill J."/>
            <person name="Mikula A."/>
            <person name="Bishai W."/>
            <person name="Jacobs W.R. Jr."/>
            <person name="Venter J.C."/>
            <person name="Fraser C.M."/>
        </authorList>
    </citation>
    <scope>NUCLEOTIDE SEQUENCE [LARGE SCALE GENOMIC DNA]</scope>
    <source>
        <strain>CDC 1551 / Oshkosh</strain>
    </source>
</reference>
<feature type="chain" id="PRO_0000427287" description="DNA-binding protein HupB">
    <location>
        <begin position="1"/>
        <end position="214"/>
    </location>
</feature>
<feature type="region of interest" description="Bacterial histone-like domain">
    <location>
        <begin position="1"/>
        <end position="90"/>
    </location>
</feature>
<feature type="region of interest" description="Disordered" evidence="5">
    <location>
        <begin position="100"/>
        <end position="214"/>
    </location>
</feature>
<feature type="region of interest" description="Degenerate repeats region">
    <location>
        <begin position="101"/>
        <end position="214"/>
    </location>
</feature>
<feature type="compositionally biased region" description="Low complexity" evidence="5">
    <location>
        <begin position="102"/>
        <end position="112"/>
    </location>
</feature>
<feature type="compositionally biased region" description="Basic residues" evidence="5">
    <location>
        <begin position="113"/>
        <end position="214"/>
    </location>
</feature>
<feature type="modified residue" description="N6-acetyllysine" evidence="1">
    <location>
        <position position="3"/>
    </location>
</feature>
<feature type="modified residue" description="N6-acetyllysine" evidence="1">
    <location>
        <position position="72"/>
    </location>
</feature>
<feature type="modified residue" description="N6-acetyllysine" evidence="1">
    <location>
        <position position="86"/>
    </location>
</feature>
<feature type="modified residue" description="N6-acetyllysine" evidence="1">
    <location>
        <position position="103"/>
    </location>
</feature>
<feature type="modified residue" description="N6-acetyllysine" evidence="1">
    <location>
        <position position="116"/>
    </location>
</feature>
<feature type="modified residue" description="N6-acetyllysine" evidence="1">
    <location>
        <position position="133"/>
    </location>
</feature>
<feature type="modified residue" description="N6-acetyllysine" evidence="1">
    <location>
        <position position="146"/>
    </location>
</feature>
<feature type="modified residue" description="N6-acetyllysine" evidence="1">
    <location>
        <position position="167"/>
    </location>
</feature>